<reference key="1">
    <citation type="journal article" date="1999" name="Am. J. Physiol.">
        <title>Cloning and functional expression of the mouse epithelial sodium channel.</title>
        <authorList>
            <person name="Ahn Y.J."/>
            <person name="Brooker D.R."/>
            <person name="Kosari F."/>
            <person name="Harte B.J."/>
            <person name="Li J."/>
            <person name="Mackler S.A."/>
            <person name="Kleyman T.R."/>
        </authorList>
    </citation>
    <scope>NUCLEOTIDE SEQUENCE [MRNA]</scope>
    <scope>FUNCTION</scope>
    <scope>TRANSPORTER ACTIVITY</scope>
    <scope>ACTIVITY REGULATION</scope>
    <scope>SUBUNIT</scope>
    <scope>SUBCELLULAR LOCATION</scope>
    <scope>TISSUE SPECIFICITY</scope>
    <source>
        <strain>C57BL/6J</strain>
        <tissue>Kidney</tissue>
    </source>
</reference>
<reference key="2">
    <citation type="journal article" date="2004" name="Genome Res.">
        <title>The status, quality, and expansion of the NIH full-length cDNA project: the Mammalian Gene Collection (MGC).</title>
        <authorList>
            <consortium name="The MGC Project Team"/>
        </authorList>
    </citation>
    <scope>NUCLEOTIDE SEQUENCE [LARGE SCALE MRNA]</scope>
    <source>
        <strain>FVB/N</strain>
        <tissue>Kidney</tissue>
    </source>
</reference>
<reference key="3">
    <citation type="journal article" date="2001" name="J. Biol. Chem.">
        <title>The Nedd4-like protein KIAA0439 is a potential regulator of the epithelial sodium channel.</title>
        <authorList>
            <person name="Harvey K.F."/>
            <person name="Dinudom A."/>
            <person name="Cook D.I."/>
            <person name="Kumar S."/>
        </authorList>
    </citation>
    <scope>UBIQUITINATION BY NEDD4 AND NEDD4L</scope>
</reference>
<reference key="4">
    <citation type="journal article" date="2003" name="FASEB J.">
        <title>The role of individual Nedd4-2 (KIAA0439) WW domains in binding and regulating epithelial sodium channels.</title>
        <authorList>
            <person name="Fotia A.B."/>
            <person name="Dinudom A."/>
            <person name="Shearwin K.E."/>
            <person name="Koch J.-P."/>
            <person name="Korbmacher C."/>
            <person name="Cook D.I."/>
            <person name="Kumar S."/>
        </authorList>
    </citation>
    <scope>UBIQUITINATION BY NEDD4L</scope>
</reference>
<reference key="5">
    <citation type="journal article" date="2003" name="J. Biol. Chem.">
        <title>Maturation of the epithelial Na+ channel involves proteolytic processing of the alpha- and gamma-subunits.</title>
        <authorList>
            <person name="Hughey R.P."/>
            <person name="Mueller G.M."/>
            <person name="Bruns J.B."/>
            <person name="Kinlough C.L."/>
            <person name="Poland P.A."/>
            <person name="Harkleroad K.L."/>
            <person name="Carattino M.D."/>
            <person name="Kleyman T.R."/>
        </authorList>
    </citation>
    <scope>FUNCTION</scope>
    <scope>TRANSPORTER ACTIVITY</scope>
    <scope>ACTIVITY REGULATION</scope>
    <scope>SUBUNIT</scope>
    <scope>GLYCOSYLATION</scope>
    <scope>PROTEOLYTIC PROCESSING</scope>
</reference>
<reference key="6">
    <citation type="journal article" date="2004" name="J. Biol. Chem.">
        <title>Epithelial sodium channels are activated by furin-dependent proteolysis.</title>
        <authorList>
            <person name="Hughey R.P."/>
            <person name="Bruns J.B."/>
            <person name="Kinlough C.L."/>
            <person name="Harkleroad K.L."/>
            <person name="Tong Q."/>
            <person name="Carattino M.D."/>
            <person name="Johnson J.P."/>
            <person name="Stockand J.D."/>
            <person name="Kleyman T.R."/>
        </authorList>
    </citation>
    <scope>FUNCTION</scope>
    <scope>TRANSPORTER ACTIVITY</scope>
    <scope>SUBUNIT</scope>
    <scope>GLYCOSYLATION</scope>
    <scope>PROTEOLYTIC PROCESSING</scope>
    <scope>REGION</scope>
    <scope>CLEAVAGE SITE</scope>
</reference>
<reference key="7">
    <citation type="journal article" date="2004" name="J. Biol. Chem.">
        <title>Regulation of neuronal voltage-gated sodium channels by the ubiquitin-protein ligases Nedd4 and Nedd4-2.</title>
        <authorList>
            <person name="Fotia A.B."/>
            <person name="Ekberg J."/>
            <person name="Adams D.J."/>
            <person name="Cook D.I."/>
            <person name="Poronnik P."/>
            <person name="Kumar S."/>
        </authorList>
    </citation>
    <scope>UBIQUITINATION BY NEDD4 AND NEDD4L</scope>
</reference>
<reference key="8">
    <citation type="journal article" date="2008" name="J. Biol. Chem.">
        <title>Proteolytic processing of the epithelial sodium channel gamma subunit has a dominant role in channel activation.</title>
        <authorList>
            <person name="Carattino M.D."/>
            <person name="Hughey R.P."/>
            <person name="Kleyman T.R."/>
        </authorList>
    </citation>
    <scope>PROTEOLYTIC PROCESSING</scope>
    <scope>REGION</scope>
    <scope>CLEAVAGE SITE</scope>
</reference>
<proteinExistence type="evidence at protein level"/>
<sequence>MAPGEKIKAKIKKNLPVRGPQAPTIKDLMHWYCLNTNTHGCRRIVVSRGRLRRLLWIAFTLTAVALIIWQCALLVFSFYTVSVSIKVHFQKLDFPAVTICNINPYKYSAVSDLLTDLDSETKQALLSLYGVKDVLDSTPRKRREAGSMRSTWEGTPPRFLNLIPLLVFNENEKGKARDFFTGRKRKISGKIIHKASNVMHVHESKKLVGFQLCSNDTSDCATYTFSSGINAIQEWYKLHYMNIMAQVPLEKKINMSYSAEELLVTCFFDGMSCDARNFTLFHHPMYGNCYTFNNRENATILSTSMGGSEYGLQVILYINEDEYNPFLVSSTGAKVLVHQQNEYPFIEDVGTEIETAMSTSIGMHLTESFKLSEPYSQCTEDGSDVPVTNIYNAAYSLQICLYSCFQTKMVEKCGCAQYSQPLPPAANYCNYQQHPNWMYCYYQLYQAFVREELGCQSVCKQSCSFKEWTLTTSLAQWPSEASEKWLLNVLTWDQSQQINKKLNKTDLAKLLIFYKDLNQRSIMESPANSIEMLLSNFGGQLGLWMSCSVVCVIEIIEVFFIDFFSIIARRQWQKAKDWWARRRTPPSTETPSSQQGQDNPALDTDDDLPTFTSAMRLPPAPEAPVPGTPPPRYNTLRLDSAFSSQLTDTQLTNEF</sequence>
<gene>
    <name evidence="17" type="primary">Scnn1g</name>
</gene>
<organism>
    <name type="scientific">Mus musculus</name>
    <name type="common">Mouse</name>
    <dbReference type="NCBI Taxonomy" id="10090"/>
    <lineage>
        <taxon>Eukaryota</taxon>
        <taxon>Metazoa</taxon>
        <taxon>Chordata</taxon>
        <taxon>Craniata</taxon>
        <taxon>Vertebrata</taxon>
        <taxon>Euteleostomi</taxon>
        <taxon>Mammalia</taxon>
        <taxon>Eutheria</taxon>
        <taxon>Euarchontoglires</taxon>
        <taxon>Glires</taxon>
        <taxon>Rodentia</taxon>
        <taxon>Myomorpha</taxon>
        <taxon>Muroidea</taxon>
        <taxon>Muridae</taxon>
        <taxon>Murinae</taxon>
        <taxon>Mus</taxon>
        <taxon>Mus</taxon>
    </lineage>
</organism>
<feature type="chain" id="PRO_0000181277" description="Epithelial sodium channel subunit gamma">
    <location>
        <begin position="1"/>
        <end position="655"/>
    </location>
</feature>
<feature type="topological domain" description="Cytoplasmic" evidence="2">
    <location>
        <begin position="1"/>
        <end position="55"/>
    </location>
</feature>
<feature type="transmembrane region" description="Helical; Name=1" evidence="3">
    <location>
        <begin position="56"/>
        <end position="76"/>
    </location>
</feature>
<feature type="topological domain" description="Extracellular" evidence="2">
    <location>
        <begin position="77"/>
        <end position="547"/>
    </location>
</feature>
<feature type="transmembrane region" description="Helical; Name=2" evidence="3">
    <location>
        <begin position="548"/>
        <end position="568"/>
    </location>
</feature>
<feature type="topological domain" description="Cytoplasmic" evidence="2">
    <location>
        <begin position="569"/>
        <end position="655"/>
    </location>
</feature>
<feature type="region of interest" description="Gating release of inhibition by proteolysis (GRIP); protease-sensitive region that is responsible for the proteolytic activation of the channel" evidence="15 16">
    <location>
        <begin position="140"/>
        <end position="227"/>
    </location>
</feature>
<feature type="region of interest" description="Disordered" evidence="4">
    <location>
        <begin position="582"/>
        <end position="636"/>
    </location>
</feature>
<feature type="short sequence motif" description="PY motif; recruits WW domain-containing proteins and is thereby required for ubiquitination and inhibition of the channel by NEDD4 and NEDD4L" evidence="2">
    <location>
        <begin position="629"/>
        <end position="633"/>
    </location>
</feature>
<feature type="compositionally biased region" description="Polar residues" evidence="4">
    <location>
        <begin position="585"/>
        <end position="598"/>
    </location>
</feature>
<feature type="compositionally biased region" description="Pro residues" evidence="4">
    <location>
        <begin position="618"/>
        <end position="632"/>
    </location>
</feature>
<feature type="site" description="Cleavage; by furin" evidence="9">
    <location>
        <begin position="143"/>
        <end position="144"/>
    </location>
</feature>
<feature type="site" description="Cleavage; by PRSS8" evidence="11">
    <location>
        <begin position="186"/>
        <end position="187"/>
    </location>
</feature>
<feature type="glycosylation site" description="N-linked (GlcNAc...) asparagine" evidence="3">
    <location>
        <position position="215"/>
    </location>
</feature>
<feature type="glycosylation site" description="N-linked (GlcNAc...) asparagine" evidence="3">
    <location>
        <position position="277"/>
    </location>
</feature>
<feature type="glycosylation site" description="N-linked (GlcNAc...) asparagine" evidence="3">
    <location>
        <position position="503"/>
    </location>
</feature>
<feature type="disulfide bond" evidence="2">
    <location>
        <begin position="100"/>
        <end position="289"/>
    </location>
</feature>
<feature type="disulfide bond" evidence="2">
    <location>
        <begin position="213"/>
        <end position="220"/>
    </location>
</feature>
<feature type="disulfide bond" evidence="2">
    <location>
        <begin position="266"/>
        <end position="273"/>
    </location>
</feature>
<feature type="disulfide bond" evidence="2">
    <location>
        <begin position="378"/>
        <end position="463"/>
    </location>
</feature>
<feature type="disulfide bond" evidence="2">
    <location>
        <begin position="400"/>
        <end position="459"/>
    </location>
</feature>
<feature type="disulfide bond" evidence="2">
    <location>
        <begin position="404"/>
        <end position="455"/>
    </location>
</feature>
<feature type="disulfide bond" evidence="2">
    <location>
        <begin position="413"/>
        <end position="440"/>
    </location>
</feature>
<feature type="disulfide bond" evidence="2">
    <location>
        <begin position="415"/>
        <end position="429"/>
    </location>
</feature>
<evidence type="ECO:0000250" key="1">
    <source>
        <dbReference type="UniProtKB" id="P37091"/>
    </source>
</evidence>
<evidence type="ECO:0000250" key="2">
    <source>
        <dbReference type="UniProtKB" id="P51170"/>
    </source>
</evidence>
<evidence type="ECO:0000255" key="3"/>
<evidence type="ECO:0000256" key="4">
    <source>
        <dbReference type="SAM" id="MobiDB-lite"/>
    </source>
</evidence>
<evidence type="ECO:0000269" key="5">
    <source>
    </source>
</evidence>
<evidence type="ECO:0000269" key="6">
    <source>
    </source>
</evidence>
<evidence type="ECO:0000269" key="7">
    <source>
    </source>
</evidence>
<evidence type="ECO:0000269" key="8">
    <source>
    </source>
</evidence>
<evidence type="ECO:0000269" key="9">
    <source>
    </source>
</evidence>
<evidence type="ECO:0000269" key="10">
    <source>
    </source>
</evidence>
<evidence type="ECO:0000269" key="11">
    <source>
    </source>
</evidence>
<evidence type="ECO:0000303" key="12">
    <source>
    </source>
</evidence>
<evidence type="ECO:0000305" key="13"/>
<evidence type="ECO:0000305" key="14">
    <source>
    </source>
</evidence>
<evidence type="ECO:0000305" key="15">
    <source>
    </source>
</evidence>
<evidence type="ECO:0000305" key="16">
    <source>
    </source>
</evidence>
<evidence type="ECO:0000312" key="17">
    <source>
        <dbReference type="MGI" id="MGI:104695"/>
    </source>
</evidence>
<dbReference type="EMBL" id="AF112187">
    <property type="protein sequence ID" value="AAD21246.1"/>
    <property type="molecule type" value="mRNA"/>
</dbReference>
<dbReference type="EMBL" id="BC021338">
    <property type="protein sequence ID" value="AAH21338.1"/>
    <property type="molecule type" value="mRNA"/>
</dbReference>
<dbReference type="CCDS" id="CCDS21803.1"/>
<dbReference type="RefSeq" id="NP_035456.1">
    <property type="nucleotide sequence ID" value="NM_011326.3"/>
</dbReference>
<dbReference type="SMR" id="Q9WU39"/>
<dbReference type="BioGRID" id="203107">
    <property type="interactions" value="7"/>
</dbReference>
<dbReference type="ComplexPortal" id="CPX-315">
    <property type="entry name" value="Amiloride-sensitive sodium channel complex, alpha-beta-gamma"/>
</dbReference>
<dbReference type="FunCoup" id="Q9WU39">
    <property type="interactions" value="116"/>
</dbReference>
<dbReference type="STRING" id="10090.ENSMUSP00000000221"/>
<dbReference type="ChEMBL" id="CHEMBL5305061"/>
<dbReference type="GuidetoPHARMACOLOGY" id="741"/>
<dbReference type="GlyCosmos" id="Q9WU39">
    <property type="glycosylation" value="3 sites, No reported glycans"/>
</dbReference>
<dbReference type="GlyGen" id="Q9WU39">
    <property type="glycosylation" value="4 sites"/>
</dbReference>
<dbReference type="iPTMnet" id="Q9WU39"/>
<dbReference type="PhosphoSitePlus" id="Q9WU39"/>
<dbReference type="SwissPalm" id="Q9WU39"/>
<dbReference type="PaxDb" id="10090-ENSMUSP00000000221"/>
<dbReference type="ProteomicsDB" id="253424"/>
<dbReference type="Antibodypedia" id="25924">
    <property type="antibodies" value="381 antibodies from 33 providers"/>
</dbReference>
<dbReference type="DNASU" id="20278"/>
<dbReference type="Ensembl" id="ENSMUST00000000221.6">
    <property type="protein sequence ID" value="ENSMUSP00000000221.6"/>
    <property type="gene ID" value="ENSMUSG00000000216.9"/>
</dbReference>
<dbReference type="GeneID" id="20278"/>
<dbReference type="KEGG" id="mmu:20278"/>
<dbReference type="UCSC" id="uc009jnv.1">
    <property type="organism name" value="mouse"/>
</dbReference>
<dbReference type="AGR" id="MGI:104695"/>
<dbReference type="CTD" id="6340"/>
<dbReference type="MGI" id="MGI:104695">
    <property type="gene designation" value="Scnn1g"/>
</dbReference>
<dbReference type="VEuPathDB" id="HostDB:ENSMUSG00000000216"/>
<dbReference type="eggNOG" id="KOG4294">
    <property type="taxonomic scope" value="Eukaryota"/>
</dbReference>
<dbReference type="GeneTree" id="ENSGT00940000160352"/>
<dbReference type="HOGENOM" id="CLU_020415_0_0_1"/>
<dbReference type="InParanoid" id="Q9WU39"/>
<dbReference type="OMA" id="KKYPNWM"/>
<dbReference type="OrthoDB" id="6021021at2759"/>
<dbReference type="PhylomeDB" id="Q9WU39"/>
<dbReference type="TreeFam" id="TF330663"/>
<dbReference type="Reactome" id="R-MMU-2672351">
    <property type="pathway name" value="Stimuli-sensing channels"/>
</dbReference>
<dbReference type="Reactome" id="R-MMU-9730628">
    <property type="pathway name" value="Sensory perception of salty taste"/>
</dbReference>
<dbReference type="BioGRID-ORCS" id="20278">
    <property type="hits" value="0 hits in 78 CRISPR screens"/>
</dbReference>
<dbReference type="PRO" id="PR:Q9WU39"/>
<dbReference type="Proteomes" id="UP000000589">
    <property type="component" value="Chromosome 7"/>
</dbReference>
<dbReference type="RNAct" id="Q9WU39">
    <property type="molecule type" value="protein"/>
</dbReference>
<dbReference type="Bgee" id="ENSMUSG00000000216">
    <property type="expression patterns" value="Expressed in right lung lobe and 45 other cell types or tissues"/>
</dbReference>
<dbReference type="GO" id="GO:0016324">
    <property type="term" value="C:apical plasma membrane"/>
    <property type="evidence" value="ECO:0000250"/>
    <property type="project" value="UniProtKB"/>
</dbReference>
<dbReference type="GO" id="GO:0009897">
    <property type="term" value="C:external side of plasma membrane"/>
    <property type="evidence" value="ECO:0000314"/>
    <property type="project" value="MGI"/>
</dbReference>
<dbReference type="GO" id="GO:0070062">
    <property type="term" value="C:extracellular exosome"/>
    <property type="evidence" value="ECO:0007669"/>
    <property type="project" value="Ensembl"/>
</dbReference>
<dbReference type="GO" id="GO:0016020">
    <property type="term" value="C:membrane"/>
    <property type="evidence" value="ECO:0000314"/>
    <property type="project" value="MGI"/>
</dbReference>
<dbReference type="GO" id="GO:0005654">
    <property type="term" value="C:nucleoplasm"/>
    <property type="evidence" value="ECO:0007669"/>
    <property type="project" value="Ensembl"/>
</dbReference>
<dbReference type="GO" id="GO:0005886">
    <property type="term" value="C:plasma membrane"/>
    <property type="evidence" value="ECO:0000250"/>
    <property type="project" value="UniProtKB"/>
</dbReference>
<dbReference type="GO" id="GO:0034706">
    <property type="term" value="C:sodium channel complex"/>
    <property type="evidence" value="ECO:0000314"/>
    <property type="project" value="MGI"/>
</dbReference>
<dbReference type="GO" id="GO:0015280">
    <property type="term" value="F:ligand-gated sodium channel activity"/>
    <property type="evidence" value="ECO:0007669"/>
    <property type="project" value="InterPro"/>
</dbReference>
<dbReference type="GO" id="GO:0005272">
    <property type="term" value="F:sodium channel activity"/>
    <property type="evidence" value="ECO:0000314"/>
    <property type="project" value="MGI"/>
</dbReference>
<dbReference type="GO" id="GO:0050699">
    <property type="term" value="F:WW domain binding"/>
    <property type="evidence" value="ECO:0000353"/>
    <property type="project" value="MGI"/>
</dbReference>
<dbReference type="GO" id="GO:0071468">
    <property type="term" value="P:cellular response to acidic pH"/>
    <property type="evidence" value="ECO:0007669"/>
    <property type="project" value="Ensembl"/>
</dbReference>
<dbReference type="GO" id="GO:1904045">
    <property type="term" value="P:cellular response to aldosterone"/>
    <property type="evidence" value="ECO:0000314"/>
    <property type="project" value="MGI"/>
</dbReference>
<dbReference type="GO" id="GO:1904117">
    <property type="term" value="P:cellular response to vasopressin"/>
    <property type="evidence" value="ECO:0000303"/>
    <property type="project" value="ComplexPortal"/>
</dbReference>
<dbReference type="GO" id="GO:0006883">
    <property type="term" value="P:intracellular sodium ion homeostasis"/>
    <property type="evidence" value="ECO:0000314"/>
    <property type="project" value="ComplexPortal"/>
</dbReference>
<dbReference type="GO" id="GO:0050891">
    <property type="term" value="P:multicellular organismal-level water homeostasis"/>
    <property type="evidence" value="ECO:0000250"/>
    <property type="project" value="UniProtKB"/>
</dbReference>
<dbReference type="GO" id="GO:0008217">
    <property type="term" value="P:regulation of blood pressure"/>
    <property type="evidence" value="ECO:0000303"/>
    <property type="project" value="ComplexPortal"/>
</dbReference>
<dbReference type="GO" id="GO:0050914">
    <property type="term" value="P:sensory perception of salty taste"/>
    <property type="evidence" value="ECO:0000303"/>
    <property type="project" value="ComplexPortal"/>
</dbReference>
<dbReference type="GO" id="GO:0050915">
    <property type="term" value="P:sensory perception of sour taste"/>
    <property type="evidence" value="ECO:0000303"/>
    <property type="project" value="ComplexPortal"/>
</dbReference>
<dbReference type="GO" id="GO:0055078">
    <property type="term" value="P:sodium ion homeostasis"/>
    <property type="evidence" value="ECO:0000250"/>
    <property type="project" value="UniProtKB"/>
</dbReference>
<dbReference type="GO" id="GO:0098719">
    <property type="term" value="P:sodium ion import across plasma membrane"/>
    <property type="evidence" value="ECO:0000314"/>
    <property type="project" value="ComplexPortal"/>
</dbReference>
<dbReference type="GO" id="GO:0006814">
    <property type="term" value="P:sodium ion transport"/>
    <property type="evidence" value="ECO:0000314"/>
    <property type="project" value="MGI"/>
</dbReference>
<dbReference type="FunFam" id="1.10.287.770:FF:000005">
    <property type="entry name" value="Amiloride-sensitive sodium channel subunit gamma"/>
    <property type="match status" value="1"/>
</dbReference>
<dbReference type="FunFam" id="2.60.470.10:FF:000005">
    <property type="entry name" value="Amiloride-sensitive sodium channel subunit gamma"/>
    <property type="match status" value="1"/>
</dbReference>
<dbReference type="Gene3D" id="2.60.470.10">
    <property type="entry name" value="Acid-sensing ion channels like domains"/>
    <property type="match status" value="1"/>
</dbReference>
<dbReference type="Gene3D" id="1.10.287.770">
    <property type="entry name" value="YojJ-like"/>
    <property type="match status" value="1"/>
</dbReference>
<dbReference type="InterPro" id="IPR001873">
    <property type="entry name" value="ENaC"/>
</dbReference>
<dbReference type="InterPro" id="IPR004724">
    <property type="entry name" value="ENaC_chordates"/>
</dbReference>
<dbReference type="InterPro" id="IPR020903">
    <property type="entry name" value="ENaC_CS"/>
</dbReference>
<dbReference type="NCBIfam" id="TIGR00859">
    <property type="entry name" value="ENaC"/>
    <property type="match status" value="1"/>
</dbReference>
<dbReference type="PANTHER" id="PTHR11690:SF19">
    <property type="entry name" value="AMILORIDE-SENSITIVE SODIUM CHANNEL SUBUNIT GAMMA"/>
    <property type="match status" value="1"/>
</dbReference>
<dbReference type="PANTHER" id="PTHR11690">
    <property type="entry name" value="AMILORIDE-SENSITIVE SODIUM CHANNEL-RELATED"/>
    <property type="match status" value="1"/>
</dbReference>
<dbReference type="Pfam" id="PF00858">
    <property type="entry name" value="ASC"/>
    <property type="match status" value="1"/>
</dbReference>
<dbReference type="PRINTS" id="PR01078">
    <property type="entry name" value="AMINACHANNEL"/>
</dbReference>
<dbReference type="PROSITE" id="PS01206">
    <property type="entry name" value="ASC"/>
    <property type="match status" value="1"/>
</dbReference>
<comment type="function">
    <text evidence="2 5 8 9">This is one of the three pore-forming subunits of the heterotrimeric epithelial sodium channel (ENaC), a critical regulator of sodium balance and fluid homeostasis (PubMed:10409305, PubMed:12871941, PubMed:15007080). ENaC operates in epithelial tissues, where it mediates the electrodiffusion of sodium ions from extracellular fluid through the apical membrane of cells, with water following osmotically (PubMed:12871941, PubMed:15007080). It plays a key role in maintaining sodium homeostasis through electrogenic sodium reabsorption in the kidneys. Additionally, ENaC is essential for airway surface liquid homeostasis, which is crucial for proper mucus clearance (By similarity).</text>
</comment>
<comment type="catalytic activity">
    <reaction evidence="5 8 9">
        <text>Na(+)(in) = Na(+)(out)</text>
        <dbReference type="Rhea" id="RHEA:34963"/>
        <dbReference type="ChEBI" id="CHEBI:29101"/>
    </reaction>
</comment>
<comment type="activity regulation">
    <text evidence="5 8 9">Originally identified and characterized by its inhibition by the diuretic drug amiloride.</text>
</comment>
<comment type="subunit">
    <text evidence="2 5 8 9">Component of the heterotrimeric epithelial sodium channel (ENaC) composed of an alpha/SCNN1A, a beta/SCNN1B and a gamma/SCNN1G subunit (PubMed:10409305, PubMed:12871941, PubMed:15007080). Interacts with WWP1 (via WW domains). Interacts with WWP2 (via WW domains); inhibits the channel. Interacts with the full-length immature form of PCSK9 (pro-PCSK9); inhibits ENaC by promoting its proteasomal degradation. Interacts with BPIFA1; the interaction is indirect via SCNN1B and inhibits the proteolytic maturation of SCNN1A and SCNN1G and the activation of ENaC (By similarity).</text>
</comment>
<comment type="subcellular location">
    <subcellularLocation>
        <location evidence="14">Apical cell membrane</location>
        <topology evidence="2">Multi-pass membrane protein</topology>
    </subcellularLocation>
</comment>
<comment type="tissue specificity">
    <text evidence="5">Lung and kidney.</text>
</comment>
<comment type="PTM">
    <text evidence="1">Phosphorylated on serine and threonine residues. Aldosterone and insulin increase the basal level of phosphorylation.</text>
</comment>
<comment type="PTM">
    <text evidence="6 7 10">Ubiquitinated. Can be ubiquitinated at multiple sites and undergo monoubiquitination and polyubiquitination. Ubiquitination by NEDD4 or NEDD4L inhibits the ENaC channel through endocytosis, intracellular retention and degradation of its individual subunits.</text>
</comment>
<comment type="PTM">
    <text evidence="2 8 9 11">ENaC is activated through the proteolytic maturation of its subunits. Furin cleaves the SCNN1G subunit first, followed by cleavage by prostasin (PRSS8), which results in a stepwise increase in the open probability of the channel due to the release of an inhibitory tract (PubMed:12871941, PubMed:15007080, PubMed:18650438). BPIFA1, which is recruited by the SCNN1B subunit, prevents the proteolytic activation of ENaC (By similarity).</text>
</comment>
<comment type="PTM">
    <text evidence="8">N-glycosylated. N-linked glycans are processed to complex type during ENaC complex assembly and transport to the plasma membrane.</text>
</comment>
<comment type="similarity">
    <text evidence="13">Belongs to the amiloride-sensitive sodium channel (TC 1.A.6) family. SCNN1G subfamily.</text>
</comment>
<keyword id="KW-1003">Cell membrane</keyword>
<keyword id="KW-1015">Disulfide bond</keyword>
<keyword id="KW-0325">Glycoprotein</keyword>
<keyword id="KW-0407">Ion channel</keyword>
<keyword id="KW-0406">Ion transport</keyword>
<keyword id="KW-0472">Membrane</keyword>
<keyword id="KW-0597">Phosphoprotein</keyword>
<keyword id="KW-1185">Reference proteome</keyword>
<keyword id="KW-0915">Sodium</keyword>
<keyword id="KW-0894">Sodium channel</keyword>
<keyword id="KW-0739">Sodium transport</keyword>
<keyword id="KW-0812">Transmembrane</keyword>
<keyword id="KW-1133">Transmembrane helix</keyword>
<keyword id="KW-0813">Transport</keyword>
<keyword id="KW-0832">Ubl conjugation</keyword>
<accession>Q9WU39</accession>
<protein>
    <recommendedName>
        <fullName evidence="14">Epithelial sodium channel subunit gamma</fullName>
        <shortName>Epithelial Na(+) channel subunit gamma</shortName>
        <shortName>Gamma-ENaC</shortName>
    </recommendedName>
    <alternativeName>
        <fullName evidence="12">Amiloride-sensitive sodium channel subunit gamma</fullName>
    </alternativeName>
    <alternativeName>
        <fullName>Gamma-NaCH</fullName>
    </alternativeName>
    <alternativeName>
        <fullName>Nonvoltage-gated sodium channel 1 subunit gamma</fullName>
    </alternativeName>
    <alternativeName>
        <fullName>SCNEG</fullName>
    </alternativeName>
</protein>
<name>SCNNG_MOUSE</name>